<accession>C5FTB4</accession>
<dbReference type="EC" id="3.1.-.-"/>
<dbReference type="EMBL" id="DS995705">
    <property type="protein sequence ID" value="EEQ33117.1"/>
    <property type="molecule type" value="Genomic_DNA"/>
</dbReference>
<dbReference type="RefSeq" id="XP_002846067.1">
    <property type="nucleotide sequence ID" value="XM_002846021.1"/>
</dbReference>
<dbReference type="SMR" id="C5FTB4"/>
<dbReference type="STRING" id="554155.C5FTB4"/>
<dbReference type="GeneID" id="9224356"/>
<dbReference type="VEuPathDB" id="FungiDB:MCYG_05936"/>
<dbReference type="eggNOG" id="ENOG502S1U4">
    <property type="taxonomic scope" value="Eukaryota"/>
</dbReference>
<dbReference type="HOGENOM" id="CLU_046484_0_1_1"/>
<dbReference type="OMA" id="IYHTPGG"/>
<dbReference type="OrthoDB" id="430293at2759"/>
<dbReference type="Proteomes" id="UP000002035">
    <property type="component" value="Unassembled WGS sequence"/>
</dbReference>
<dbReference type="GO" id="GO:0016020">
    <property type="term" value="C:membrane"/>
    <property type="evidence" value="ECO:0007669"/>
    <property type="project" value="UniProtKB-SubCell"/>
</dbReference>
<dbReference type="GO" id="GO:0005739">
    <property type="term" value="C:mitochondrion"/>
    <property type="evidence" value="ECO:0007669"/>
    <property type="project" value="UniProtKB-SubCell"/>
</dbReference>
<dbReference type="GO" id="GO:0004519">
    <property type="term" value="F:endonuclease activity"/>
    <property type="evidence" value="ECO:0007669"/>
    <property type="project" value="UniProtKB-KW"/>
</dbReference>
<dbReference type="GO" id="GO:0046872">
    <property type="term" value="F:metal ion binding"/>
    <property type="evidence" value="ECO:0007669"/>
    <property type="project" value="UniProtKB-KW"/>
</dbReference>
<dbReference type="FunFam" id="2.40.50.90:FF:000029">
    <property type="entry name" value="Probable endonuclease lcl3"/>
    <property type="match status" value="1"/>
</dbReference>
<dbReference type="Gene3D" id="2.40.50.90">
    <property type="match status" value="1"/>
</dbReference>
<dbReference type="InterPro" id="IPR035437">
    <property type="entry name" value="SNase_OB-fold_sf"/>
</dbReference>
<dbReference type="InterPro" id="IPR016071">
    <property type="entry name" value="Staphylococal_nuclease_OB-fold"/>
</dbReference>
<dbReference type="PANTHER" id="PTHR12302">
    <property type="entry name" value="EBNA2 BINDING PROTEIN P100"/>
    <property type="match status" value="1"/>
</dbReference>
<dbReference type="PANTHER" id="PTHR12302:SF3">
    <property type="entry name" value="SERINE_THREONINE-PROTEIN KINASE 31"/>
    <property type="match status" value="1"/>
</dbReference>
<dbReference type="Pfam" id="PF00565">
    <property type="entry name" value="SNase"/>
    <property type="match status" value="1"/>
</dbReference>
<dbReference type="SMART" id="SM00318">
    <property type="entry name" value="SNc"/>
    <property type="match status" value="1"/>
</dbReference>
<dbReference type="SUPFAM" id="SSF50199">
    <property type="entry name" value="Staphylococcal nuclease"/>
    <property type="match status" value="1"/>
</dbReference>
<dbReference type="PROSITE" id="PS50830">
    <property type="entry name" value="TNASE_3"/>
    <property type="match status" value="1"/>
</dbReference>
<proteinExistence type="inferred from homology"/>
<reference key="1">
    <citation type="journal article" date="2012" name="MBio">
        <title>Comparative genome analysis of Trichophyton rubrum and related dermatophytes reveals candidate genes involved in infection.</title>
        <authorList>
            <person name="Martinez D.A."/>
            <person name="Oliver B.G."/>
            <person name="Graeser Y."/>
            <person name="Goldberg J.M."/>
            <person name="Li W."/>
            <person name="Martinez-Rossi N.M."/>
            <person name="Monod M."/>
            <person name="Shelest E."/>
            <person name="Barton R.C."/>
            <person name="Birch E."/>
            <person name="Brakhage A.A."/>
            <person name="Chen Z."/>
            <person name="Gurr S.J."/>
            <person name="Heiman D."/>
            <person name="Heitman J."/>
            <person name="Kosti I."/>
            <person name="Rossi A."/>
            <person name="Saif S."/>
            <person name="Samalova M."/>
            <person name="Saunders C.W."/>
            <person name="Shea T."/>
            <person name="Summerbell R.C."/>
            <person name="Xu J."/>
            <person name="Young S."/>
            <person name="Zeng Q."/>
            <person name="Birren B.W."/>
            <person name="Cuomo C.A."/>
            <person name="White T.C."/>
        </authorList>
    </citation>
    <scope>NUCLEOTIDE SEQUENCE [LARGE SCALE GENOMIC DNA]</scope>
    <source>
        <strain>ATCC MYA-4605 / CBS 113480</strain>
    </source>
</reference>
<evidence type="ECO:0000250" key="1"/>
<evidence type="ECO:0000255" key="2"/>
<evidence type="ECO:0000255" key="3">
    <source>
        <dbReference type="PROSITE-ProRule" id="PRU00272"/>
    </source>
</evidence>
<evidence type="ECO:0000305" key="4"/>
<keyword id="KW-0106">Calcium</keyword>
<keyword id="KW-0255">Endonuclease</keyword>
<keyword id="KW-0378">Hydrolase</keyword>
<keyword id="KW-0472">Membrane</keyword>
<keyword id="KW-0479">Metal-binding</keyword>
<keyword id="KW-0496">Mitochondrion</keyword>
<keyword id="KW-0540">Nuclease</keyword>
<keyword id="KW-1185">Reference proteome</keyword>
<keyword id="KW-0812">Transmembrane</keyword>
<keyword id="KW-1133">Transmembrane helix</keyword>
<gene>
    <name type="primary">LCL3</name>
    <name type="ORF">MCYG_05936</name>
</gene>
<name>LCL3_ARTOC</name>
<protein>
    <recommendedName>
        <fullName>Probable endonuclease LCL3</fullName>
        <ecNumber>3.1.-.-</ecNumber>
    </recommendedName>
</protein>
<organism>
    <name type="scientific">Arthroderma otae (strain ATCC MYA-4605 / CBS 113480)</name>
    <name type="common">Microsporum canis</name>
    <dbReference type="NCBI Taxonomy" id="554155"/>
    <lineage>
        <taxon>Eukaryota</taxon>
        <taxon>Fungi</taxon>
        <taxon>Dikarya</taxon>
        <taxon>Ascomycota</taxon>
        <taxon>Pezizomycotina</taxon>
        <taxon>Eurotiomycetes</taxon>
        <taxon>Eurotiomycetidae</taxon>
        <taxon>Onygenales</taxon>
        <taxon>Arthrodermataceae</taxon>
        <taxon>Microsporum</taxon>
    </lineage>
</organism>
<comment type="subcellular location">
    <subcellularLocation>
        <location>Mitochondrion</location>
    </subcellularLocation>
    <subcellularLocation>
        <location evidence="1">Membrane</location>
        <topology evidence="1">Single-pass membrane protein</topology>
    </subcellularLocation>
</comment>
<comment type="similarity">
    <text evidence="4">Belongs to the LCL3 family.</text>
</comment>
<feature type="chain" id="PRO_0000408640" description="Probable endonuclease LCL3">
    <location>
        <begin position="1"/>
        <end position="282"/>
    </location>
</feature>
<feature type="transmembrane region" description="Helical" evidence="2">
    <location>
        <begin position="55"/>
        <end position="71"/>
    </location>
</feature>
<feature type="domain" description="TNase-like" evidence="3">
    <location>
        <begin position="95"/>
        <end position="256"/>
    </location>
</feature>
<feature type="active site" evidence="3">
    <location>
        <position position="144"/>
    </location>
</feature>
<feature type="active site" evidence="3">
    <location>
        <position position="152"/>
    </location>
</feature>
<feature type="active site" evidence="3">
    <location>
        <position position="192"/>
    </location>
</feature>
<feature type="binding site" evidence="3">
    <location>
        <position position="149"/>
    </location>
    <ligand>
        <name>Ca(2+)</name>
        <dbReference type="ChEBI" id="CHEBI:29108"/>
    </ligand>
</feature>
<sequence>MRWLFWTSENDKDECKCNNKPSSNSDEKPSIILNSSKDWNALSNATNWSHFLEPSNLIPTVLLTSGILFAVRIHRRYLRRIPEATNISPSYLRQRSILGKVTSVGDGDNFRIYHTPGGMLAGWGWLRKVPTSKKELKNNTIHIRIAGVDAPELAHFGRPSQPFGEEAHTWLTNRLIGRRIRAYVYRPDQYSRVVATVYAYRFLFFPQDIGLQMLREGLATIYEAKSGAEFGGPKQEKKYRDAEALAKKKGKGLWKAKASSDWESPRDFKSRMNAIDQGKGST</sequence>